<reference evidence="5" key="1">
    <citation type="journal article" date="2008" name="J. Proteomics">
        <title>A proteomics approach to identify proteins differentially expressed in Douglas-fir seedlings infected by Phellinus sulphurascens.</title>
        <authorList>
            <person name="Islam M.A."/>
            <person name="Sturrock R.N."/>
            <person name="Ekramoddoullah A.K.M."/>
        </authorList>
    </citation>
    <scope>IDENTIFICATION BY MASS SPECTROMETRY</scope>
</reference>
<comment type="subcellular location">
    <subcellularLocation>
        <location evidence="1 3">Nucleus</location>
    </subcellularLocation>
</comment>
<comment type="similarity">
    <text evidence="2">Belongs to the bZIP family.</text>
</comment>
<evidence type="ECO:0000250" key="1">
    <source>
        <dbReference type="UniProtKB" id="P24068"/>
    </source>
</evidence>
<evidence type="ECO:0000255" key="2"/>
<evidence type="ECO:0000255" key="3">
    <source>
        <dbReference type="PROSITE-ProRule" id="PRU00978"/>
    </source>
</evidence>
<evidence type="ECO:0000303" key="4">
    <source>
    </source>
</evidence>
<evidence type="ECO:0000305" key="5"/>
<keyword id="KW-0238">DNA-binding</keyword>
<keyword id="KW-0539">Nucleus</keyword>
<keyword id="KW-0804">Transcription</keyword>
<keyword id="KW-0805">Transcription regulation</keyword>
<name>BZIP_PSEMZ</name>
<protein>
    <recommendedName>
        <fullName evidence="4">Probable bZIP transcription factor</fullName>
    </recommendedName>
</protein>
<feature type="chain" id="PRO_0000397944" description="Probable bZIP transcription factor">
    <location>
        <begin position="1" status="less than"/>
        <end position="19" status="greater than"/>
    </location>
</feature>
<feature type="domain" description="bZIP" evidence="3">
    <location>
        <begin position="1"/>
        <end position="19"/>
    </location>
</feature>
<feature type="region of interest" description="Basic motif" evidence="3">
    <location>
        <begin position="1"/>
        <end position="19"/>
    </location>
</feature>
<feature type="non-terminal residue" evidence="4">
    <location>
        <position position="1"/>
    </location>
</feature>
<feature type="non-terminal residue" evidence="4">
    <location>
        <position position="19"/>
    </location>
</feature>
<sequence>KRMLSNRESARRSRMRKQK</sequence>
<proteinExistence type="evidence at protein level"/>
<dbReference type="GO" id="GO:0005634">
    <property type="term" value="C:nucleus"/>
    <property type="evidence" value="ECO:0007669"/>
    <property type="project" value="UniProtKB-SubCell"/>
</dbReference>
<dbReference type="GO" id="GO:0003677">
    <property type="term" value="F:DNA binding"/>
    <property type="evidence" value="ECO:0007669"/>
    <property type="project" value="UniProtKB-KW"/>
</dbReference>
<dbReference type="GO" id="GO:0003700">
    <property type="term" value="F:DNA-binding transcription factor activity"/>
    <property type="evidence" value="ECO:0007669"/>
    <property type="project" value="InterPro"/>
</dbReference>
<dbReference type="InterPro" id="IPR004827">
    <property type="entry name" value="bZIP"/>
</dbReference>
<dbReference type="InterPro" id="IPR046347">
    <property type="entry name" value="bZIP_sf"/>
</dbReference>
<dbReference type="SUPFAM" id="SSF57959">
    <property type="entry name" value="Leucine zipper domain"/>
    <property type="match status" value="1"/>
</dbReference>
<dbReference type="PROSITE" id="PS00036">
    <property type="entry name" value="BZIP_BASIC"/>
    <property type="match status" value="1"/>
</dbReference>
<organism>
    <name type="scientific">Pseudotsuga menziesii</name>
    <name type="common">Douglas-fir</name>
    <name type="synonym">Abies menziesii</name>
    <dbReference type="NCBI Taxonomy" id="3357"/>
    <lineage>
        <taxon>Eukaryota</taxon>
        <taxon>Viridiplantae</taxon>
        <taxon>Streptophyta</taxon>
        <taxon>Embryophyta</taxon>
        <taxon>Tracheophyta</taxon>
        <taxon>Spermatophyta</taxon>
        <taxon>Pinopsida</taxon>
        <taxon>Pinidae</taxon>
        <taxon>Conifers I</taxon>
        <taxon>Pinales</taxon>
        <taxon>Pinaceae</taxon>
        <taxon>Pseudotsuga</taxon>
    </lineage>
</organism>
<accession>P85926</accession>